<name>SCL3_ARATH</name>
<organism>
    <name type="scientific">Arabidopsis thaliana</name>
    <name type="common">Mouse-ear cress</name>
    <dbReference type="NCBI Taxonomy" id="3702"/>
    <lineage>
        <taxon>Eukaryota</taxon>
        <taxon>Viridiplantae</taxon>
        <taxon>Streptophyta</taxon>
        <taxon>Embryophyta</taxon>
        <taxon>Tracheophyta</taxon>
        <taxon>Spermatophyta</taxon>
        <taxon>Magnoliopsida</taxon>
        <taxon>eudicotyledons</taxon>
        <taxon>Gunneridae</taxon>
        <taxon>Pentapetalae</taxon>
        <taxon>rosids</taxon>
        <taxon>malvids</taxon>
        <taxon>Brassicales</taxon>
        <taxon>Brassicaceae</taxon>
        <taxon>Camelineae</taxon>
        <taxon>Arabidopsis</taxon>
    </lineage>
</organism>
<protein>
    <recommendedName>
        <fullName evidence="7">Scarecrow-like protein 3</fullName>
        <shortName evidence="7">AtSCL3</shortName>
    </recommendedName>
    <alternativeName>
        <fullName>GRAS family protein 5</fullName>
        <shortName>AtGRAS-5</shortName>
    </alternativeName>
</protein>
<accession>Q9LPR8</accession>
<accession>Q9XE52</accession>
<keyword id="KW-0002">3D-structure</keyword>
<keyword id="KW-0539">Nucleus</keyword>
<keyword id="KW-1185">Reference proteome</keyword>
<keyword id="KW-0804">Transcription</keyword>
<keyword id="KW-0805">Transcription regulation</keyword>
<reference key="1">
    <citation type="journal article" date="2000" name="Nature">
        <title>Sequence and analysis of chromosome 1 of the plant Arabidopsis thaliana.</title>
        <authorList>
            <person name="Theologis A."/>
            <person name="Ecker J.R."/>
            <person name="Palm C.J."/>
            <person name="Federspiel N.A."/>
            <person name="Kaul S."/>
            <person name="White O."/>
            <person name="Alonso J."/>
            <person name="Altafi H."/>
            <person name="Araujo R."/>
            <person name="Bowman C.L."/>
            <person name="Brooks S.Y."/>
            <person name="Buehler E."/>
            <person name="Chan A."/>
            <person name="Chao Q."/>
            <person name="Chen H."/>
            <person name="Cheuk R.F."/>
            <person name="Chin C.W."/>
            <person name="Chung M.K."/>
            <person name="Conn L."/>
            <person name="Conway A.B."/>
            <person name="Conway A.R."/>
            <person name="Creasy T.H."/>
            <person name="Dewar K."/>
            <person name="Dunn P."/>
            <person name="Etgu P."/>
            <person name="Feldblyum T.V."/>
            <person name="Feng J.-D."/>
            <person name="Fong B."/>
            <person name="Fujii C.Y."/>
            <person name="Gill J.E."/>
            <person name="Goldsmith A.D."/>
            <person name="Haas B."/>
            <person name="Hansen N.F."/>
            <person name="Hughes B."/>
            <person name="Huizar L."/>
            <person name="Hunter J.L."/>
            <person name="Jenkins J."/>
            <person name="Johnson-Hopson C."/>
            <person name="Khan S."/>
            <person name="Khaykin E."/>
            <person name="Kim C.J."/>
            <person name="Koo H.L."/>
            <person name="Kremenetskaia I."/>
            <person name="Kurtz D.B."/>
            <person name="Kwan A."/>
            <person name="Lam B."/>
            <person name="Langin-Hooper S."/>
            <person name="Lee A."/>
            <person name="Lee J.M."/>
            <person name="Lenz C.A."/>
            <person name="Li J.H."/>
            <person name="Li Y.-P."/>
            <person name="Lin X."/>
            <person name="Liu S.X."/>
            <person name="Liu Z.A."/>
            <person name="Luros J.S."/>
            <person name="Maiti R."/>
            <person name="Marziali A."/>
            <person name="Militscher J."/>
            <person name="Miranda M."/>
            <person name="Nguyen M."/>
            <person name="Nierman W.C."/>
            <person name="Osborne B.I."/>
            <person name="Pai G."/>
            <person name="Peterson J."/>
            <person name="Pham P.K."/>
            <person name="Rizzo M."/>
            <person name="Rooney T."/>
            <person name="Rowley D."/>
            <person name="Sakano H."/>
            <person name="Salzberg S.L."/>
            <person name="Schwartz J.R."/>
            <person name="Shinn P."/>
            <person name="Southwick A.M."/>
            <person name="Sun H."/>
            <person name="Tallon L.J."/>
            <person name="Tambunga G."/>
            <person name="Toriumi M.J."/>
            <person name="Town C.D."/>
            <person name="Utterback T."/>
            <person name="Van Aken S."/>
            <person name="Vaysberg M."/>
            <person name="Vysotskaia V.S."/>
            <person name="Walker M."/>
            <person name="Wu D."/>
            <person name="Yu G."/>
            <person name="Fraser C.M."/>
            <person name="Venter J.C."/>
            <person name="Davis R.W."/>
        </authorList>
    </citation>
    <scope>NUCLEOTIDE SEQUENCE [LARGE SCALE GENOMIC DNA]</scope>
    <source>
        <strain>cv. Columbia</strain>
    </source>
</reference>
<reference key="2">
    <citation type="journal article" date="2017" name="Plant J.">
        <title>Araport11: a complete reannotation of the Arabidopsis thaliana reference genome.</title>
        <authorList>
            <person name="Cheng C.Y."/>
            <person name="Krishnakumar V."/>
            <person name="Chan A.P."/>
            <person name="Thibaud-Nissen F."/>
            <person name="Schobel S."/>
            <person name="Town C.D."/>
        </authorList>
    </citation>
    <scope>GENOME REANNOTATION</scope>
    <source>
        <strain>cv. Columbia</strain>
    </source>
</reference>
<reference key="3">
    <citation type="journal article" date="2003" name="Science">
        <title>Empirical analysis of transcriptional activity in the Arabidopsis genome.</title>
        <authorList>
            <person name="Yamada K."/>
            <person name="Lim J."/>
            <person name="Dale J.M."/>
            <person name="Chen H."/>
            <person name="Shinn P."/>
            <person name="Palm C.J."/>
            <person name="Southwick A.M."/>
            <person name="Wu H.C."/>
            <person name="Kim C.J."/>
            <person name="Nguyen M."/>
            <person name="Pham P.K."/>
            <person name="Cheuk R.F."/>
            <person name="Karlin-Newmann G."/>
            <person name="Liu S.X."/>
            <person name="Lam B."/>
            <person name="Sakano H."/>
            <person name="Wu T."/>
            <person name="Yu G."/>
            <person name="Miranda M."/>
            <person name="Quach H.L."/>
            <person name="Tripp M."/>
            <person name="Chang C.H."/>
            <person name="Lee J.M."/>
            <person name="Toriumi M.J."/>
            <person name="Chan M.M."/>
            <person name="Tang C.C."/>
            <person name="Onodera C.S."/>
            <person name="Deng J.M."/>
            <person name="Akiyama K."/>
            <person name="Ansari Y."/>
            <person name="Arakawa T."/>
            <person name="Banh J."/>
            <person name="Banno F."/>
            <person name="Bowser L."/>
            <person name="Brooks S.Y."/>
            <person name="Carninci P."/>
            <person name="Chao Q."/>
            <person name="Choy N."/>
            <person name="Enju A."/>
            <person name="Goldsmith A.D."/>
            <person name="Gurjal M."/>
            <person name="Hansen N.F."/>
            <person name="Hayashizaki Y."/>
            <person name="Johnson-Hopson C."/>
            <person name="Hsuan V.W."/>
            <person name="Iida K."/>
            <person name="Karnes M."/>
            <person name="Khan S."/>
            <person name="Koesema E."/>
            <person name="Ishida J."/>
            <person name="Jiang P.X."/>
            <person name="Jones T."/>
            <person name="Kawai J."/>
            <person name="Kamiya A."/>
            <person name="Meyers C."/>
            <person name="Nakajima M."/>
            <person name="Narusaka M."/>
            <person name="Seki M."/>
            <person name="Sakurai T."/>
            <person name="Satou M."/>
            <person name="Tamse R."/>
            <person name="Vaysberg M."/>
            <person name="Wallender E.K."/>
            <person name="Wong C."/>
            <person name="Yamamura Y."/>
            <person name="Yuan S."/>
            <person name="Shinozaki K."/>
            <person name="Davis R.W."/>
            <person name="Theologis A."/>
            <person name="Ecker J.R."/>
        </authorList>
    </citation>
    <scope>NUCLEOTIDE SEQUENCE [LARGE SCALE MRNA]</scope>
    <source>
        <strain>cv. Columbia</strain>
    </source>
</reference>
<reference key="4">
    <citation type="journal article" date="1999" name="Plant J.">
        <title>The GRAS gene family in Arabidopsis: sequence characterization and basic expression analysis of the SCARECROW-LIKE genes.</title>
        <authorList>
            <person name="Pysh L.D."/>
            <person name="Wysocka-Diller J.W."/>
            <person name="Camilleri C."/>
            <person name="Bouchez D."/>
            <person name="Benfey P.N."/>
        </authorList>
    </citation>
    <scope>NUCLEOTIDE SEQUENCE [MRNA] OF 158-482</scope>
    <scope>TISSUE SPECIFICITY</scope>
</reference>
<reference key="5">
    <citation type="journal article" date="2004" name="Plant Mol. Biol.">
        <title>Genome-wide analysis of the GRAS gene family in rice and Arabidopsis.</title>
        <authorList>
            <person name="Tian C."/>
            <person name="Wan P."/>
            <person name="Sun S."/>
            <person name="Li J."/>
            <person name="Chen M."/>
        </authorList>
    </citation>
    <scope>GENE FAMILY</scope>
</reference>
<reference key="6">
    <citation type="journal article" date="2008" name="Plant Mol. Biol.">
        <title>Large-scale analysis of the GRAS gene family in Arabidopsis thaliana.</title>
        <authorList>
            <person name="Lee M.-H."/>
            <person name="Kim B."/>
            <person name="Song S.-K."/>
            <person name="Heo J.-O."/>
            <person name="Yu N.-I."/>
            <person name="Lee S.A."/>
            <person name="Kim M."/>
            <person name="Kim D.G."/>
            <person name="Sohn S.O."/>
            <person name="Lim C.E."/>
            <person name="Chang K.S."/>
            <person name="Lee M.M."/>
            <person name="Lim J."/>
        </authorList>
    </citation>
    <scope>GENE FAMILY</scope>
    <scope>TISSUE SPECIFICITY</scope>
</reference>
<reference key="7">
    <citation type="journal article" date="2014" name="Proc. Natl. Acad. Sci. U.S.A.">
        <title>DELLA protein functions as a transcriptional activator through the DNA binding of the indeterminate domain family proteins.</title>
        <authorList>
            <person name="Yoshida H."/>
            <person name="Hirano K."/>
            <person name="Sato T."/>
            <person name="Mitsuda N."/>
            <person name="Nomoto M."/>
            <person name="Maeo K."/>
            <person name="Koketsu E."/>
            <person name="Mitani R."/>
            <person name="Kawamura M."/>
            <person name="Ishiguro S."/>
            <person name="Tada Y."/>
            <person name="Ohme-Takagi M."/>
            <person name="Matsuoka M."/>
            <person name="Ueguchi-Tanaka M."/>
        </authorList>
    </citation>
    <scope>INTERACTION WITH MGP/IDD3; IDD4; IDD5; BIB/IDD9 AND JKD/IDD10</scope>
</reference>
<feature type="chain" id="PRO_0000350847" description="Scarecrow-like protein 3">
    <location>
        <begin position="1"/>
        <end position="482"/>
    </location>
</feature>
<feature type="domain" description="GRAS" evidence="2">
    <location>
        <begin position="45"/>
        <end position="479"/>
    </location>
</feature>
<feature type="region of interest" description="Leucine repeat I (LRI)" evidence="2">
    <location>
        <begin position="52"/>
        <end position="115"/>
    </location>
</feature>
<feature type="region of interest" description="VHIID" evidence="2">
    <location>
        <begin position="134"/>
        <end position="199"/>
    </location>
</feature>
<feature type="region of interest" description="Leucine repeat II (LRII)" evidence="2">
    <location>
        <begin position="209"/>
        <end position="241"/>
    </location>
</feature>
<feature type="region of interest" description="PFYRE" evidence="2">
    <location>
        <begin position="250"/>
        <end position="401"/>
    </location>
</feature>
<feature type="region of interest" description="Disordered" evidence="3">
    <location>
        <begin position="302"/>
        <end position="324"/>
    </location>
</feature>
<feature type="region of interest" description="SAW" evidence="2">
    <location>
        <begin position="404"/>
        <end position="479"/>
    </location>
</feature>
<feature type="short sequence motif" description="VHIID" evidence="2">
    <location>
        <begin position="165"/>
        <end position="169"/>
    </location>
</feature>
<feature type="compositionally biased region" description="Polar residues" evidence="3">
    <location>
        <begin position="305"/>
        <end position="324"/>
    </location>
</feature>
<feature type="helix" evidence="11">
    <location>
        <begin position="47"/>
        <end position="67"/>
    </location>
</feature>
<feature type="helix" evidence="11">
    <location>
        <begin position="70"/>
        <end position="83"/>
    </location>
</feature>
<feature type="helix" evidence="11">
    <location>
        <begin position="90"/>
        <end position="107"/>
    </location>
</feature>
<feature type="helix" evidence="11">
    <location>
        <begin position="111"/>
        <end position="116"/>
    </location>
</feature>
<feature type="helix" evidence="11">
    <location>
        <begin position="127"/>
        <end position="140"/>
    </location>
</feature>
<feature type="helix" evidence="11">
    <location>
        <begin position="143"/>
        <end position="158"/>
    </location>
</feature>
<feature type="turn" evidence="11">
    <location>
        <begin position="159"/>
        <end position="161"/>
    </location>
</feature>
<feature type="strand" evidence="11">
    <location>
        <begin position="163"/>
        <end position="171"/>
    </location>
</feature>
<feature type="helix" evidence="11">
    <location>
        <begin position="176"/>
        <end position="187"/>
    </location>
</feature>
<feature type="strand" evidence="12">
    <location>
        <begin position="188"/>
        <end position="190"/>
    </location>
</feature>
<feature type="strand" evidence="11">
    <location>
        <begin position="194"/>
        <end position="202"/>
    </location>
</feature>
<feature type="helix" evidence="11">
    <location>
        <begin position="204"/>
        <end position="221"/>
    </location>
</feature>
<feature type="strand" evidence="11">
    <location>
        <begin position="225"/>
        <end position="231"/>
    </location>
</feature>
<feature type="turn" evidence="11">
    <location>
        <begin position="234"/>
        <end position="236"/>
    </location>
</feature>
<feature type="helix" evidence="11">
    <location>
        <begin position="239"/>
        <end position="242"/>
    </location>
</feature>
<feature type="strand" evidence="11">
    <location>
        <begin position="248"/>
        <end position="256"/>
    </location>
</feature>
<feature type="helix" evidence="11">
    <location>
        <begin position="258"/>
        <end position="262"/>
    </location>
</feature>
<feature type="helix" evidence="11">
    <location>
        <begin position="328"/>
        <end position="338"/>
    </location>
</feature>
<feature type="strand" evidence="11">
    <location>
        <begin position="342"/>
        <end position="349"/>
    </location>
</feature>
<feature type="helix" evidence="11">
    <location>
        <begin position="358"/>
        <end position="379"/>
    </location>
</feature>
<feature type="helix" evidence="11">
    <location>
        <begin position="385"/>
        <end position="393"/>
    </location>
</feature>
<feature type="helix" evidence="11">
    <location>
        <begin position="395"/>
        <end position="404"/>
    </location>
</feature>
<feature type="helix" evidence="11">
    <location>
        <begin position="407"/>
        <end position="409"/>
    </location>
</feature>
<feature type="helix" evidence="11">
    <location>
        <begin position="417"/>
        <end position="426"/>
    </location>
</feature>
<feature type="strand" evidence="11">
    <location>
        <begin position="429"/>
        <end position="432"/>
    </location>
</feature>
<feature type="helix" evidence="11">
    <location>
        <begin position="436"/>
        <end position="446"/>
    </location>
</feature>
<feature type="strand" evidence="12">
    <location>
        <begin position="448"/>
        <end position="450"/>
    </location>
</feature>
<feature type="strand" evidence="11">
    <location>
        <begin position="454"/>
        <end position="459"/>
    </location>
</feature>
<feature type="strand" evidence="11">
    <location>
        <begin position="462"/>
        <end position="467"/>
    </location>
</feature>
<feature type="strand" evidence="11">
    <location>
        <begin position="470"/>
        <end position="480"/>
    </location>
</feature>
<evidence type="ECO:0000250" key="1"/>
<evidence type="ECO:0000255" key="2">
    <source>
        <dbReference type="PROSITE-ProRule" id="PRU01191"/>
    </source>
</evidence>
<evidence type="ECO:0000256" key="3">
    <source>
        <dbReference type="SAM" id="MobiDB-lite"/>
    </source>
</evidence>
<evidence type="ECO:0000269" key="4">
    <source>
    </source>
</evidence>
<evidence type="ECO:0000269" key="5">
    <source>
    </source>
</evidence>
<evidence type="ECO:0000269" key="6">
    <source>
    </source>
</evidence>
<evidence type="ECO:0000303" key="7">
    <source>
    </source>
</evidence>
<evidence type="ECO:0000305" key="8"/>
<evidence type="ECO:0000312" key="9">
    <source>
        <dbReference type="Araport" id="AT1G50420"/>
    </source>
</evidence>
<evidence type="ECO:0000312" key="10">
    <source>
        <dbReference type="EMBL" id="AAF87889.1"/>
    </source>
</evidence>
<evidence type="ECO:0007829" key="11">
    <source>
        <dbReference type="PDB" id="6KPB"/>
    </source>
</evidence>
<evidence type="ECO:0007829" key="12">
    <source>
        <dbReference type="PDB" id="6KPD"/>
    </source>
</evidence>
<proteinExistence type="evidence at protein level"/>
<gene>
    <name evidence="7" type="primary">SCL3</name>
    <name evidence="9" type="ordered locus">At1g50420</name>
    <name evidence="10" type="ORF">F11F12.22</name>
</gene>
<comment type="function">
    <text evidence="1">Probable transcription factor involved in plant development.</text>
</comment>
<comment type="subunit">
    <text evidence="6">Binds to zinc finger proteins MGP/IDD3, IDD4, IDD5, BIB/IDD9 and JKD/IDD10.</text>
</comment>
<comment type="interaction">
    <interactant intactId="EBI-4429250">
        <id>Q9LPR8</id>
    </interactant>
    <interactant intactId="EBI-4443456">
        <id>Q94BY1</id>
        <label>At3g52155</label>
    </interactant>
    <organismsDiffer>false</organismsDiffer>
    <experiments>3</experiments>
</comment>
<comment type="interaction">
    <interactant intactId="EBI-4429250">
        <id>Q9LPR8</id>
    </interactant>
    <interactant intactId="EBI-25518453">
        <id>A0A178UPG8</id>
        <label>AXX17_At5g51100</label>
    </interactant>
    <organismsDiffer>false</organismsDiffer>
    <experiments>3</experiments>
</comment>
<comment type="interaction">
    <interactant intactId="EBI-4429250">
        <id>Q9LPR8</id>
    </interactant>
    <interactant intactId="EBI-4453651">
        <id>F4I907</id>
        <label>GLYR2</label>
    </interactant>
    <organismsDiffer>false</organismsDiffer>
    <experiments>3</experiments>
</comment>
<comment type="interaction">
    <interactant intactId="EBI-4429250">
        <id>Q9LPR8</id>
    </interactant>
    <interactant intactId="EBI-4435514">
        <id>O49627</id>
        <label>ISU1</label>
    </interactant>
    <organismsDiffer>false</organismsDiffer>
    <experiments>4</experiments>
</comment>
<comment type="interaction">
    <interactant intactId="EBI-4429250">
        <id>Q9LPR8</id>
    </interactant>
    <interactant intactId="EBI-963624">
        <id>Q9SLH3</id>
        <label>RGA</label>
    </interactant>
    <organismsDiffer>false</organismsDiffer>
    <experiments>3</experiments>
</comment>
<comment type="interaction">
    <interactant intactId="EBI-4429250">
        <id>Q9LPR8</id>
    </interactant>
    <interactant intactId="EBI-25518433">
        <id>Q9SHF8</id>
    </interactant>
    <organismsDiffer>false</organismsDiffer>
    <experiments>3</experiments>
</comment>
<comment type="subcellular location">
    <subcellularLocation>
        <location evidence="8">Nucleus</location>
    </subcellularLocation>
</comment>
<comment type="tissue specificity">
    <text evidence="4 5">Expressed in seedlings, root epidermis, leaves, flowers and siliques.</text>
</comment>
<comment type="similarity">
    <text evidence="8">Belongs to the GRAS family.</text>
</comment>
<sequence>MVAMFQEDNGTSSVASSPLQVFSTMSLNRPTLLASSSPFHCLKDLKPEERGLYLIHLLLTCANHVASGSLQNANAALEQLSHLASPDGDTMQRIAAYFTEALANRILKSWPGLYKALNATQTRTNNVSEEIHVRRLFFEMFPILKVSYLLTNRAILEAMEGEKMVHVIDLDASEPAQWLALLQAFNSRPEGPPHLRITGVHHQKEVLEQMAHRLIEEAEKLDIPFQFNPVVSRLDCLNVEQLRVKTGEALAVSSVLQLHTFLASDDDLMRKNCALRFQNNPSGVDLQRVLMMSHGSAAEARENDMSNNNGYSPSGDSASSLPLPSSGRTDSFLNAIWGLSPKVMVVTEQDSDHNGSTLMERLLESLYTYAALFDCLETKVPRTSQDRIKVEKMLFGEEIKNIISCEGFERRERHEKLEKWSQRIDLAGFGNVPLSYYAMLQARRLLQGCGFDGYRIKEESGCAVICWQDRPLYSVSAWRCRK</sequence>
<dbReference type="EMBL" id="AC012561">
    <property type="protein sequence ID" value="AAF87889.1"/>
    <property type="molecule type" value="Genomic_DNA"/>
</dbReference>
<dbReference type="EMBL" id="CP002684">
    <property type="protein sequence ID" value="AEE32546.1"/>
    <property type="molecule type" value="Genomic_DNA"/>
</dbReference>
<dbReference type="EMBL" id="AY056154">
    <property type="protein sequence ID" value="AAL07233.1"/>
    <property type="molecule type" value="mRNA"/>
</dbReference>
<dbReference type="EMBL" id="AY091260">
    <property type="protein sequence ID" value="AAM14199.1"/>
    <property type="molecule type" value="mRNA"/>
</dbReference>
<dbReference type="EMBL" id="AF036301">
    <property type="protein sequence ID" value="AAD24404.1"/>
    <property type="molecule type" value="mRNA"/>
</dbReference>
<dbReference type="PIR" id="E96540">
    <property type="entry name" value="E96540"/>
</dbReference>
<dbReference type="PIR" id="T51235">
    <property type="entry name" value="T51235"/>
</dbReference>
<dbReference type="RefSeq" id="NP_175459.1">
    <property type="nucleotide sequence ID" value="NM_103925.6"/>
</dbReference>
<dbReference type="PDB" id="6KPB">
    <property type="method" value="X-ray"/>
    <property type="resolution" value="2.40 A"/>
    <property type="chains" value="C=1-482"/>
</dbReference>
<dbReference type="PDB" id="6KPD">
    <property type="method" value="X-ray"/>
    <property type="resolution" value="3.20 A"/>
    <property type="chains" value="C=1-482"/>
</dbReference>
<dbReference type="PDBsum" id="6KPB"/>
<dbReference type="PDBsum" id="6KPD"/>
<dbReference type="SMR" id="Q9LPR8"/>
<dbReference type="BioGRID" id="26689">
    <property type="interactions" value="23"/>
</dbReference>
<dbReference type="DIP" id="DIP-60306N"/>
<dbReference type="FunCoup" id="Q9LPR8">
    <property type="interactions" value="830"/>
</dbReference>
<dbReference type="IntAct" id="Q9LPR8">
    <property type="interactions" value="16"/>
</dbReference>
<dbReference type="STRING" id="3702.Q9LPR8"/>
<dbReference type="PaxDb" id="3702-AT1G50420.1"/>
<dbReference type="ProteomicsDB" id="232697"/>
<dbReference type="EnsemblPlants" id="AT1G50420.1">
    <property type="protein sequence ID" value="AT1G50420.1"/>
    <property type="gene ID" value="AT1G50420"/>
</dbReference>
<dbReference type="GeneID" id="841464"/>
<dbReference type="Gramene" id="AT1G50420.1">
    <property type="protein sequence ID" value="AT1G50420.1"/>
    <property type="gene ID" value="AT1G50420"/>
</dbReference>
<dbReference type="KEGG" id="ath:AT1G50420"/>
<dbReference type="Araport" id="AT1G50420"/>
<dbReference type="TAIR" id="AT1G50420">
    <property type="gene designation" value="SCL3"/>
</dbReference>
<dbReference type="eggNOG" id="ENOG502QPNC">
    <property type="taxonomic scope" value="Eukaryota"/>
</dbReference>
<dbReference type="HOGENOM" id="CLU_011924_0_0_1"/>
<dbReference type="InParanoid" id="Q9LPR8"/>
<dbReference type="OMA" id="EGDTMQR"/>
<dbReference type="OrthoDB" id="762338at2759"/>
<dbReference type="PhylomeDB" id="Q9LPR8"/>
<dbReference type="PRO" id="PR:Q9LPR8"/>
<dbReference type="Proteomes" id="UP000006548">
    <property type="component" value="Chromosome 1"/>
</dbReference>
<dbReference type="ExpressionAtlas" id="Q9LPR8">
    <property type="expression patterns" value="baseline and differential"/>
</dbReference>
<dbReference type="GO" id="GO:0005634">
    <property type="term" value="C:nucleus"/>
    <property type="evidence" value="ECO:0000314"/>
    <property type="project" value="TAIR"/>
</dbReference>
<dbReference type="GO" id="GO:0003700">
    <property type="term" value="F:DNA-binding transcription factor activity"/>
    <property type="evidence" value="ECO:0000250"/>
    <property type="project" value="TAIR"/>
</dbReference>
<dbReference type="GO" id="GO:0006355">
    <property type="term" value="P:regulation of DNA-templated transcription"/>
    <property type="evidence" value="ECO:0000304"/>
    <property type="project" value="TAIR"/>
</dbReference>
<dbReference type="GO" id="GO:0009739">
    <property type="term" value="P:response to gibberellin"/>
    <property type="evidence" value="ECO:0000270"/>
    <property type="project" value="TAIR"/>
</dbReference>
<dbReference type="InterPro" id="IPR005202">
    <property type="entry name" value="TF_GRAS"/>
</dbReference>
<dbReference type="PANTHER" id="PTHR31636">
    <property type="entry name" value="OSJNBA0084A10.13 PROTEIN-RELATED"/>
    <property type="match status" value="1"/>
</dbReference>
<dbReference type="Pfam" id="PF03514">
    <property type="entry name" value="GRAS"/>
    <property type="match status" value="1"/>
</dbReference>
<dbReference type="PROSITE" id="PS50985">
    <property type="entry name" value="GRAS"/>
    <property type="match status" value="1"/>
</dbReference>